<name>RS19_CLOBB</name>
<accession>B2TIH9</accession>
<comment type="function">
    <text evidence="1">Protein S19 forms a complex with S13 that binds strongly to the 16S ribosomal RNA.</text>
</comment>
<comment type="similarity">
    <text evidence="1">Belongs to the universal ribosomal protein uS19 family.</text>
</comment>
<proteinExistence type="inferred from homology"/>
<evidence type="ECO:0000255" key="1">
    <source>
        <dbReference type="HAMAP-Rule" id="MF_00531"/>
    </source>
</evidence>
<evidence type="ECO:0000305" key="2"/>
<gene>
    <name evidence="1" type="primary">rpsS</name>
    <name type="ordered locus">CLL_A0242</name>
</gene>
<feature type="chain" id="PRO_1000127952" description="Small ribosomal subunit protein uS19">
    <location>
        <begin position="1"/>
        <end position="92"/>
    </location>
</feature>
<reference key="1">
    <citation type="submission" date="2008-04" db="EMBL/GenBank/DDBJ databases">
        <title>Complete sequence of Clostridium botulinum strain Eklund.</title>
        <authorList>
            <person name="Brinkac L.M."/>
            <person name="Brown J.L."/>
            <person name="Bruce D."/>
            <person name="Detter C."/>
            <person name="Munk C."/>
            <person name="Smith L.A."/>
            <person name="Smith T.J."/>
            <person name="Sutton G."/>
            <person name="Brettin T.S."/>
        </authorList>
    </citation>
    <scope>NUCLEOTIDE SEQUENCE [LARGE SCALE GENOMIC DNA]</scope>
    <source>
        <strain>Eklund 17B / Type B</strain>
    </source>
</reference>
<keyword id="KW-0687">Ribonucleoprotein</keyword>
<keyword id="KW-0689">Ribosomal protein</keyword>
<keyword id="KW-0694">RNA-binding</keyword>
<keyword id="KW-0699">rRNA-binding</keyword>
<dbReference type="EMBL" id="CP001056">
    <property type="protein sequence ID" value="ACD21795.1"/>
    <property type="molecule type" value="Genomic_DNA"/>
</dbReference>
<dbReference type="SMR" id="B2TIH9"/>
<dbReference type="KEGG" id="cbk:CLL_A0242"/>
<dbReference type="PATRIC" id="fig|935198.13.peg.217"/>
<dbReference type="HOGENOM" id="CLU_144911_0_1_9"/>
<dbReference type="Proteomes" id="UP000001195">
    <property type="component" value="Chromosome"/>
</dbReference>
<dbReference type="GO" id="GO:0005737">
    <property type="term" value="C:cytoplasm"/>
    <property type="evidence" value="ECO:0007669"/>
    <property type="project" value="UniProtKB-ARBA"/>
</dbReference>
<dbReference type="GO" id="GO:0015935">
    <property type="term" value="C:small ribosomal subunit"/>
    <property type="evidence" value="ECO:0007669"/>
    <property type="project" value="InterPro"/>
</dbReference>
<dbReference type="GO" id="GO:0019843">
    <property type="term" value="F:rRNA binding"/>
    <property type="evidence" value="ECO:0007669"/>
    <property type="project" value="UniProtKB-UniRule"/>
</dbReference>
<dbReference type="GO" id="GO:0003735">
    <property type="term" value="F:structural constituent of ribosome"/>
    <property type="evidence" value="ECO:0007669"/>
    <property type="project" value="InterPro"/>
</dbReference>
<dbReference type="GO" id="GO:0000028">
    <property type="term" value="P:ribosomal small subunit assembly"/>
    <property type="evidence" value="ECO:0007669"/>
    <property type="project" value="TreeGrafter"/>
</dbReference>
<dbReference type="GO" id="GO:0006412">
    <property type="term" value="P:translation"/>
    <property type="evidence" value="ECO:0007669"/>
    <property type="project" value="UniProtKB-UniRule"/>
</dbReference>
<dbReference type="FunFam" id="3.30.860.10:FF:000001">
    <property type="entry name" value="30S ribosomal protein S19"/>
    <property type="match status" value="1"/>
</dbReference>
<dbReference type="Gene3D" id="3.30.860.10">
    <property type="entry name" value="30s Ribosomal Protein S19, Chain A"/>
    <property type="match status" value="1"/>
</dbReference>
<dbReference type="HAMAP" id="MF_00531">
    <property type="entry name" value="Ribosomal_uS19"/>
    <property type="match status" value="1"/>
</dbReference>
<dbReference type="InterPro" id="IPR002222">
    <property type="entry name" value="Ribosomal_uS19"/>
</dbReference>
<dbReference type="InterPro" id="IPR005732">
    <property type="entry name" value="Ribosomal_uS19_bac-type"/>
</dbReference>
<dbReference type="InterPro" id="IPR020934">
    <property type="entry name" value="Ribosomal_uS19_CS"/>
</dbReference>
<dbReference type="InterPro" id="IPR023575">
    <property type="entry name" value="Ribosomal_uS19_SF"/>
</dbReference>
<dbReference type="NCBIfam" id="TIGR01050">
    <property type="entry name" value="rpsS_bact"/>
    <property type="match status" value="1"/>
</dbReference>
<dbReference type="PANTHER" id="PTHR11880">
    <property type="entry name" value="RIBOSOMAL PROTEIN S19P FAMILY MEMBER"/>
    <property type="match status" value="1"/>
</dbReference>
<dbReference type="PANTHER" id="PTHR11880:SF8">
    <property type="entry name" value="SMALL RIBOSOMAL SUBUNIT PROTEIN US19M"/>
    <property type="match status" value="1"/>
</dbReference>
<dbReference type="Pfam" id="PF00203">
    <property type="entry name" value="Ribosomal_S19"/>
    <property type="match status" value="1"/>
</dbReference>
<dbReference type="PIRSF" id="PIRSF002144">
    <property type="entry name" value="Ribosomal_S19"/>
    <property type="match status" value="1"/>
</dbReference>
<dbReference type="PRINTS" id="PR00975">
    <property type="entry name" value="RIBOSOMALS19"/>
</dbReference>
<dbReference type="SUPFAM" id="SSF54570">
    <property type="entry name" value="Ribosomal protein S19"/>
    <property type="match status" value="1"/>
</dbReference>
<dbReference type="PROSITE" id="PS00323">
    <property type="entry name" value="RIBOSOMAL_S19"/>
    <property type="match status" value="1"/>
</dbReference>
<sequence>MSRSTKKAPFVHEGLLKKIEEMNASGDKKVVKTWSRSSTIYPQMIGHTIAVHDGRKHVPVYLSEDMVGHKLGEFVLTRTYRGHVADKTSKRK</sequence>
<organism>
    <name type="scientific">Clostridium botulinum (strain Eklund 17B / Type B)</name>
    <dbReference type="NCBI Taxonomy" id="935198"/>
    <lineage>
        <taxon>Bacteria</taxon>
        <taxon>Bacillati</taxon>
        <taxon>Bacillota</taxon>
        <taxon>Clostridia</taxon>
        <taxon>Eubacteriales</taxon>
        <taxon>Clostridiaceae</taxon>
        <taxon>Clostridium</taxon>
    </lineage>
</organism>
<protein>
    <recommendedName>
        <fullName evidence="1">Small ribosomal subunit protein uS19</fullName>
    </recommendedName>
    <alternativeName>
        <fullName evidence="2">30S ribosomal protein S19</fullName>
    </alternativeName>
</protein>